<gene>
    <name evidence="1" type="primary">atpH</name>
    <name type="ordered locus">BCG9842_B5521</name>
</gene>
<dbReference type="EMBL" id="CP001186">
    <property type="protein sequence ID" value="ACK96774.1"/>
    <property type="molecule type" value="Genomic_DNA"/>
</dbReference>
<dbReference type="RefSeq" id="WP_000064682.1">
    <property type="nucleotide sequence ID" value="NC_011772.1"/>
</dbReference>
<dbReference type="SMR" id="B7IQW1"/>
<dbReference type="GeneID" id="87590851"/>
<dbReference type="KEGG" id="bcg:BCG9842_B5521"/>
<dbReference type="HOGENOM" id="CLU_085114_4_1_9"/>
<dbReference type="Proteomes" id="UP000006744">
    <property type="component" value="Chromosome"/>
</dbReference>
<dbReference type="GO" id="GO:0005886">
    <property type="term" value="C:plasma membrane"/>
    <property type="evidence" value="ECO:0007669"/>
    <property type="project" value="UniProtKB-SubCell"/>
</dbReference>
<dbReference type="GO" id="GO:0045259">
    <property type="term" value="C:proton-transporting ATP synthase complex"/>
    <property type="evidence" value="ECO:0007669"/>
    <property type="project" value="UniProtKB-KW"/>
</dbReference>
<dbReference type="GO" id="GO:0046933">
    <property type="term" value="F:proton-transporting ATP synthase activity, rotational mechanism"/>
    <property type="evidence" value="ECO:0007669"/>
    <property type="project" value="UniProtKB-UniRule"/>
</dbReference>
<dbReference type="Gene3D" id="1.10.520.20">
    <property type="entry name" value="N-terminal domain of the delta subunit of the F1F0-ATP synthase"/>
    <property type="match status" value="1"/>
</dbReference>
<dbReference type="HAMAP" id="MF_01416">
    <property type="entry name" value="ATP_synth_delta_bact"/>
    <property type="match status" value="1"/>
</dbReference>
<dbReference type="InterPro" id="IPR026015">
    <property type="entry name" value="ATP_synth_OSCP/delta_N_sf"/>
</dbReference>
<dbReference type="InterPro" id="IPR020781">
    <property type="entry name" value="ATPase_OSCP/d_CS"/>
</dbReference>
<dbReference type="InterPro" id="IPR000711">
    <property type="entry name" value="ATPase_OSCP/dsu"/>
</dbReference>
<dbReference type="NCBIfam" id="TIGR01145">
    <property type="entry name" value="ATP_synt_delta"/>
    <property type="match status" value="1"/>
</dbReference>
<dbReference type="NCBIfam" id="NF004402">
    <property type="entry name" value="PRK05758.2-2"/>
    <property type="match status" value="1"/>
</dbReference>
<dbReference type="NCBIfam" id="NF004403">
    <property type="entry name" value="PRK05758.2-4"/>
    <property type="match status" value="1"/>
</dbReference>
<dbReference type="PANTHER" id="PTHR11910">
    <property type="entry name" value="ATP SYNTHASE DELTA CHAIN"/>
    <property type="match status" value="1"/>
</dbReference>
<dbReference type="Pfam" id="PF00213">
    <property type="entry name" value="OSCP"/>
    <property type="match status" value="1"/>
</dbReference>
<dbReference type="PRINTS" id="PR00125">
    <property type="entry name" value="ATPASEDELTA"/>
</dbReference>
<dbReference type="SUPFAM" id="SSF47928">
    <property type="entry name" value="N-terminal domain of the delta subunit of the F1F0-ATP synthase"/>
    <property type="match status" value="1"/>
</dbReference>
<dbReference type="PROSITE" id="PS00389">
    <property type="entry name" value="ATPASE_DELTA"/>
    <property type="match status" value="1"/>
</dbReference>
<sequence>MSNGIVAKRYAVALFKIAKEKHVLEMFEEELRLVQNVYVKNGELHSFLTQPNISKEQKKTFLANVFGSVSESILNTLYILIDNKRIDILPEIADEYVVLANEERNVADATVYSIRLLSEEEKLNIAEAFAKRTGKDAIRVKNVVDEDLLGGIKVRIGNRIYDGSLQGKLARIQRELMKNR</sequence>
<organism>
    <name type="scientific">Bacillus cereus (strain G9842)</name>
    <dbReference type="NCBI Taxonomy" id="405531"/>
    <lineage>
        <taxon>Bacteria</taxon>
        <taxon>Bacillati</taxon>
        <taxon>Bacillota</taxon>
        <taxon>Bacilli</taxon>
        <taxon>Bacillales</taxon>
        <taxon>Bacillaceae</taxon>
        <taxon>Bacillus</taxon>
        <taxon>Bacillus cereus group</taxon>
    </lineage>
</organism>
<proteinExistence type="inferred from homology"/>
<feature type="chain" id="PRO_1000184649" description="ATP synthase subunit delta">
    <location>
        <begin position="1"/>
        <end position="180"/>
    </location>
</feature>
<name>ATPD_BACC2</name>
<keyword id="KW-0066">ATP synthesis</keyword>
<keyword id="KW-1003">Cell membrane</keyword>
<keyword id="KW-0139">CF(1)</keyword>
<keyword id="KW-0375">Hydrogen ion transport</keyword>
<keyword id="KW-0406">Ion transport</keyword>
<keyword id="KW-0472">Membrane</keyword>
<keyword id="KW-0813">Transport</keyword>
<accession>B7IQW1</accession>
<protein>
    <recommendedName>
        <fullName evidence="1">ATP synthase subunit delta</fullName>
    </recommendedName>
    <alternativeName>
        <fullName evidence="1">ATP synthase F(1) sector subunit delta</fullName>
    </alternativeName>
    <alternativeName>
        <fullName evidence="1">F-type ATPase subunit delta</fullName>
        <shortName evidence="1">F-ATPase subunit delta</shortName>
    </alternativeName>
</protein>
<comment type="function">
    <text evidence="1">F(1)F(0) ATP synthase produces ATP from ADP in the presence of a proton or sodium gradient. F-type ATPases consist of two structural domains, F(1) containing the extramembraneous catalytic core and F(0) containing the membrane proton channel, linked together by a central stalk and a peripheral stalk. During catalysis, ATP synthesis in the catalytic domain of F(1) is coupled via a rotary mechanism of the central stalk subunits to proton translocation.</text>
</comment>
<comment type="function">
    <text evidence="1">This protein is part of the stalk that links CF(0) to CF(1). It either transmits conformational changes from CF(0) to CF(1) or is implicated in proton conduction.</text>
</comment>
<comment type="subunit">
    <text evidence="1">F-type ATPases have 2 components, F(1) - the catalytic core - and F(0) - the membrane proton channel. F(1) has five subunits: alpha(3), beta(3), gamma(1), delta(1), epsilon(1). F(0) has three main subunits: a(1), b(2) and c(10-14). The alpha and beta chains form an alternating ring which encloses part of the gamma chain. F(1) is attached to F(0) by a central stalk formed by the gamma and epsilon chains, while a peripheral stalk is formed by the delta and b chains.</text>
</comment>
<comment type="subcellular location">
    <subcellularLocation>
        <location evidence="1">Cell membrane</location>
        <topology evidence="1">Peripheral membrane protein</topology>
    </subcellularLocation>
</comment>
<comment type="similarity">
    <text evidence="1">Belongs to the ATPase delta chain family.</text>
</comment>
<evidence type="ECO:0000255" key="1">
    <source>
        <dbReference type="HAMAP-Rule" id="MF_01416"/>
    </source>
</evidence>
<reference key="1">
    <citation type="submission" date="2008-10" db="EMBL/GenBank/DDBJ databases">
        <title>Genome sequence of Bacillus cereus G9842.</title>
        <authorList>
            <person name="Dodson R.J."/>
            <person name="Durkin A.S."/>
            <person name="Rosovitz M.J."/>
            <person name="Rasko D.A."/>
            <person name="Hoffmaster A."/>
            <person name="Ravel J."/>
            <person name="Sutton G."/>
        </authorList>
    </citation>
    <scope>NUCLEOTIDE SEQUENCE [LARGE SCALE GENOMIC DNA]</scope>
    <source>
        <strain>G9842</strain>
    </source>
</reference>